<sequence>MRGFLMFTSGPFDIDFVVLWVDGSDEKWLQKRAIYSSTKQQNNAVRFRDYGIFKYWFRAVAKYAPWVHHVYLVTDEQIPNWLSIQNSKVSVIDHKSIMPEDALPTFNSSAIELNIANIPGLSEHFVYFNDDMFLNRQVTPMDFFSEDGLPKDSAVQNAIMPVEDFDHMTANNVMLINQNFNKYQVLRRHPFRFFNFRYGFLNVLSICLLPWPRFTRFQDPHVPISFRKSVFEKVLNLHRDAWNETSHNRFRNRNDNTIWLIRYYQLVTAQFNPRTPFVGKKYNIGEMKKIVNDINTGKHKMICINDQNVSMAEFDNLTKQLRSTFRSKLPQKSEFEK</sequence>
<evidence type="ECO:0000305" key="1"/>
<name>CPS2G_LACPL</name>
<comment type="miscellaneous">
    <text>Stealth proteins are part of a protein family that is conserved from bacteria to higher eukaryotes. Family members were first identified in microbes as proteins that help pathogens to elude the host innate immune system. Microbial stealth proteins are involved in the biosynthesis of exopolysaccharides. Stealth proteins are predicted to function as hexose-1-phosphoryltransferases.</text>
</comment>
<comment type="similarity">
    <text evidence="1">Belongs to the stealth family.</text>
</comment>
<protein>
    <recommendedName>
        <fullName>Exopolysaccharide phosphotransferase cps2G</fullName>
        <ecNumber>2.7.-.-</ecNumber>
    </recommendedName>
    <alternativeName>
        <fullName>Stealth protein cps2G</fullName>
    </alternativeName>
</protein>
<keyword id="KW-0270">Exopolysaccharide synthesis</keyword>
<keyword id="KW-1185">Reference proteome</keyword>
<keyword id="KW-0808">Transferase</keyword>
<gene>
    <name type="primary">cps2G</name>
    <name type="ordered locus">lp_1203</name>
</gene>
<proteinExistence type="inferred from homology"/>
<organism>
    <name type="scientific">Lactiplantibacillus plantarum (strain ATCC BAA-793 / NCIMB 8826 / WCFS1)</name>
    <name type="common">Lactobacillus plantarum</name>
    <dbReference type="NCBI Taxonomy" id="220668"/>
    <lineage>
        <taxon>Bacteria</taxon>
        <taxon>Bacillati</taxon>
        <taxon>Bacillota</taxon>
        <taxon>Bacilli</taxon>
        <taxon>Lactobacillales</taxon>
        <taxon>Lactobacillaceae</taxon>
        <taxon>Lactiplantibacillus</taxon>
    </lineage>
</organism>
<accession>Q88XJ7</accession>
<accession>F9UN01</accession>
<dbReference type="EC" id="2.7.-.-"/>
<dbReference type="EMBL" id="AL935263">
    <property type="protein sequence ID" value="CCC78590.1"/>
    <property type="molecule type" value="Genomic_DNA"/>
</dbReference>
<dbReference type="RefSeq" id="YP_004889104.1">
    <property type="nucleotide sequence ID" value="NC_004567.2"/>
</dbReference>
<dbReference type="SMR" id="Q88XJ7"/>
<dbReference type="STRING" id="220668.lp_1203"/>
<dbReference type="EnsemblBacteria" id="CCC78590">
    <property type="protein sequence ID" value="CCC78590"/>
    <property type="gene ID" value="lp_1203"/>
</dbReference>
<dbReference type="KEGG" id="lpl:lp_1203"/>
<dbReference type="PATRIC" id="fig|220668.9.peg.1021"/>
<dbReference type="eggNOG" id="COG0438">
    <property type="taxonomic scope" value="Bacteria"/>
</dbReference>
<dbReference type="HOGENOM" id="CLU_043224_1_0_9"/>
<dbReference type="OrthoDB" id="9776077at2"/>
<dbReference type="PhylomeDB" id="Q88XJ7"/>
<dbReference type="Proteomes" id="UP000000432">
    <property type="component" value="Chromosome"/>
</dbReference>
<dbReference type="GO" id="GO:0016772">
    <property type="term" value="F:transferase activity, transferring phosphorus-containing groups"/>
    <property type="evidence" value="ECO:0007669"/>
    <property type="project" value="InterPro"/>
</dbReference>
<dbReference type="GO" id="GO:0000271">
    <property type="term" value="P:polysaccharide biosynthetic process"/>
    <property type="evidence" value="ECO:0007669"/>
    <property type="project" value="UniProtKB-KW"/>
</dbReference>
<dbReference type="InterPro" id="IPR047141">
    <property type="entry name" value="Stealth"/>
</dbReference>
<dbReference type="InterPro" id="IPR031358">
    <property type="entry name" value="Stealth_CR1"/>
</dbReference>
<dbReference type="InterPro" id="IPR021520">
    <property type="entry name" value="Stealth_CR2"/>
</dbReference>
<dbReference type="InterPro" id="IPR031357">
    <property type="entry name" value="Stealth_CR3"/>
</dbReference>
<dbReference type="PANTHER" id="PTHR24045">
    <property type="match status" value="1"/>
</dbReference>
<dbReference type="PANTHER" id="PTHR24045:SF0">
    <property type="entry name" value="N-ACETYLGLUCOSAMINE-1-PHOSPHOTRANSFERASE SUBUNITS ALPHA_BETA"/>
    <property type="match status" value="1"/>
</dbReference>
<dbReference type="Pfam" id="PF17101">
    <property type="entry name" value="Stealth_CR1"/>
    <property type="match status" value="1"/>
</dbReference>
<dbReference type="Pfam" id="PF11380">
    <property type="entry name" value="Stealth_CR2"/>
    <property type="match status" value="1"/>
</dbReference>
<dbReference type="Pfam" id="PF17102">
    <property type="entry name" value="Stealth_CR3"/>
    <property type="match status" value="1"/>
</dbReference>
<reference key="1">
    <citation type="journal article" date="2003" name="Proc. Natl. Acad. Sci. U.S.A.">
        <title>Complete genome sequence of Lactobacillus plantarum WCFS1.</title>
        <authorList>
            <person name="Kleerebezem M."/>
            <person name="Boekhorst J."/>
            <person name="van Kranenburg R."/>
            <person name="Molenaar D."/>
            <person name="Kuipers O.P."/>
            <person name="Leer R."/>
            <person name="Tarchini R."/>
            <person name="Peters S.A."/>
            <person name="Sandbrink H.M."/>
            <person name="Fiers M.W.E.J."/>
            <person name="Stiekema W."/>
            <person name="Klein Lankhorst R.M."/>
            <person name="Bron P.A."/>
            <person name="Hoffer S.M."/>
            <person name="Nierop Groot M.N."/>
            <person name="Kerkhoven R."/>
            <person name="De Vries M."/>
            <person name="Ursing B."/>
            <person name="De Vos W.M."/>
            <person name="Siezen R.J."/>
        </authorList>
    </citation>
    <scope>NUCLEOTIDE SEQUENCE [LARGE SCALE GENOMIC DNA]</scope>
    <source>
        <strain>ATCC BAA-793 / NCIMB 8826 / WCFS1</strain>
    </source>
</reference>
<reference key="2">
    <citation type="journal article" date="2012" name="J. Bacteriol.">
        <title>Complete resequencing and reannotation of the Lactobacillus plantarum WCFS1 genome.</title>
        <authorList>
            <person name="Siezen R.J."/>
            <person name="Francke C."/>
            <person name="Renckens B."/>
            <person name="Boekhorst J."/>
            <person name="Wels M."/>
            <person name="Kleerebezem M."/>
            <person name="van Hijum S.A."/>
        </authorList>
    </citation>
    <scope>NUCLEOTIDE SEQUENCE [LARGE SCALE GENOMIC DNA]</scope>
    <scope>GENOME REANNOTATION</scope>
    <source>
        <strain>ATCC BAA-793 / NCIMB 8826 / WCFS1</strain>
    </source>
</reference>
<reference key="3">
    <citation type="journal article" date="2005" name="PLoS Comput. Biol.">
        <title>Stealth proteins: in silico identification of a novel protein family rendering bacterial pathogens invisible to host immune defense.</title>
        <authorList>
            <person name="Sperisen P."/>
            <person name="Schmid C.D."/>
            <person name="Bucher P."/>
            <person name="Zilian O."/>
        </authorList>
    </citation>
    <scope>IDENTIFICATION AS A STEALTH PROTEIN</scope>
    <scope>PREDICTION OF FUNCTION</scope>
</reference>
<feature type="chain" id="PRO_0000235946" description="Exopolysaccharide phosphotransferase cps2G">
    <location>
        <begin position="1"/>
        <end position="337"/>
    </location>
</feature>